<feature type="chain" id="PRO_0000331232" description="Phytanoyl-CoA dioxygenase domain-containing protein 1 homolog">
    <location>
        <begin position="1"/>
        <end position="281"/>
    </location>
</feature>
<feature type="binding site" evidence="1">
    <location>
        <position position="95"/>
    </location>
    <ligand>
        <name>2-oxoglutarate</name>
        <dbReference type="ChEBI" id="CHEBI:16810"/>
    </ligand>
</feature>
<feature type="binding site" evidence="1">
    <location>
        <position position="134"/>
    </location>
    <ligand>
        <name>2-oxoglutarate</name>
        <dbReference type="ChEBI" id="CHEBI:16810"/>
    </ligand>
</feature>
<feature type="binding site" evidence="1">
    <location>
        <begin position="149"/>
        <end position="151"/>
    </location>
    <ligand>
        <name>2-oxoglutarate</name>
        <dbReference type="ChEBI" id="CHEBI:16810"/>
    </ligand>
</feature>
<feature type="binding site" evidence="1">
    <location>
        <position position="149"/>
    </location>
    <ligand>
        <name>Fe cation</name>
        <dbReference type="ChEBI" id="CHEBI:24875"/>
    </ligand>
</feature>
<feature type="binding site" evidence="1">
    <location>
        <position position="151"/>
    </location>
    <ligand>
        <name>Fe cation</name>
        <dbReference type="ChEBI" id="CHEBI:24875"/>
    </ligand>
</feature>
<feature type="binding site" evidence="1">
    <location>
        <position position="166"/>
    </location>
    <ligand>
        <name>2-oxoglutarate</name>
        <dbReference type="ChEBI" id="CHEBI:16810"/>
    </ligand>
</feature>
<feature type="binding site" evidence="1">
    <location>
        <position position="239"/>
    </location>
    <ligand>
        <name>Fe cation</name>
        <dbReference type="ChEBI" id="CHEBI:24875"/>
    </ligand>
</feature>
<feature type="binding site" evidence="1">
    <location>
        <position position="241"/>
    </location>
    <ligand>
        <name>2-oxoglutarate</name>
        <dbReference type="ChEBI" id="CHEBI:16810"/>
    </ligand>
</feature>
<feature type="binding site" evidence="1">
    <location>
        <position position="250"/>
    </location>
    <ligand>
        <name>2-oxoglutarate</name>
        <dbReference type="ChEBI" id="CHEBI:16810"/>
    </ligand>
</feature>
<organism>
    <name type="scientific">Dictyostelium discoideum</name>
    <name type="common">Social amoeba</name>
    <dbReference type="NCBI Taxonomy" id="44689"/>
    <lineage>
        <taxon>Eukaryota</taxon>
        <taxon>Amoebozoa</taxon>
        <taxon>Evosea</taxon>
        <taxon>Eumycetozoa</taxon>
        <taxon>Dictyostelia</taxon>
        <taxon>Dictyosteliales</taxon>
        <taxon>Dictyosteliaceae</taxon>
        <taxon>Dictyostelium</taxon>
    </lineage>
</organism>
<sequence>MKLTEEQVAQYKKDGFLIIRNFNTTEEIDIVRGEMKKLIDELDTPSTISIFTTSEQERKVDDYFLGSGDKIRYFFEKGSIEDGKLIVPKDMAFNKVGHALHDLNPKFEEFSYSQKIHDLIYSLGIYNKALSGIMYIFKNQKIGGEVDIHQDSTFLHTTPLTTHAIWFAFEDSTIENGCLRGLPGSHTEGITRRFITDPNSESGCSFIKLAEDKQYNKSDFVALECKKGDIILLDGSVVHYSEPNTSPNSRHAYTLHFIEGDNGVIYENDNWLQSAKPFRVL</sequence>
<gene>
    <name type="primary">phyhd1</name>
    <name type="ORF">DDB_G0278961</name>
</gene>
<comment type="function">
    <text evidence="1">Has alpha-ketoglutarate-dependent dioxygenase activity. Does not show detectable activity towards fatty acid CoA thioesters. Is not expected to be active with phytanoyl CoA (By similarity).</text>
</comment>
<comment type="cofactor">
    <cofactor evidence="1">
        <name>Fe cation</name>
        <dbReference type="ChEBI" id="CHEBI:24875"/>
    </cofactor>
</comment>
<comment type="similarity">
    <text evidence="2">Belongs to the PhyH family. PHYHD1 subfamily.</text>
</comment>
<proteinExistence type="inferred from homology"/>
<accession>Q54XH6</accession>
<dbReference type="EC" id="1.-.-.-"/>
<dbReference type="EMBL" id="AAFI02000024">
    <property type="protein sequence ID" value="EAL68082.1"/>
    <property type="molecule type" value="Genomic_DNA"/>
</dbReference>
<dbReference type="RefSeq" id="XP_647827.1">
    <property type="nucleotide sequence ID" value="XM_642735.1"/>
</dbReference>
<dbReference type="SMR" id="Q54XH6"/>
<dbReference type="FunCoup" id="Q54XH6">
    <property type="interactions" value="152"/>
</dbReference>
<dbReference type="STRING" id="44689.Q54XH6"/>
<dbReference type="PaxDb" id="44689-DDB0218136"/>
<dbReference type="EnsemblProtists" id="EAL68082">
    <property type="protein sequence ID" value="EAL68082"/>
    <property type="gene ID" value="DDB_G0278961"/>
</dbReference>
<dbReference type="GeneID" id="8621787"/>
<dbReference type="KEGG" id="ddi:DDB_G0278961"/>
<dbReference type="dictyBase" id="DDB_G0278961"/>
<dbReference type="VEuPathDB" id="AmoebaDB:DDB_G0278961"/>
<dbReference type="eggNOG" id="KOG3290">
    <property type="taxonomic scope" value="Eukaryota"/>
</dbReference>
<dbReference type="HOGENOM" id="CLU_048953_0_0_1"/>
<dbReference type="InParanoid" id="Q54XH6"/>
<dbReference type="OMA" id="KYSEDNW"/>
<dbReference type="PhylomeDB" id="Q54XH6"/>
<dbReference type="PRO" id="PR:Q54XH6"/>
<dbReference type="Proteomes" id="UP000002195">
    <property type="component" value="Chromosome 3"/>
</dbReference>
<dbReference type="GO" id="GO:0051213">
    <property type="term" value="F:dioxygenase activity"/>
    <property type="evidence" value="ECO:0007669"/>
    <property type="project" value="UniProtKB-KW"/>
</dbReference>
<dbReference type="GO" id="GO:0046872">
    <property type="term" value="F:metal ion binding"/>
    <property type="evidence" value="ECO:0007669"/>
    <property type="project" value="UniProtKB-KW"/>
</dbReference>
<dbReference type="Gene3D" id="2.60.120.620">
    <property type="entry name" value="q2cbj1_9rhob like domain"/>
    <property type="match status" value="1"/>
</dbReference>
<dbReference type="InterPro" id="IPR008775">
    <property type="entry name" value="Phytyl_CoA_dOase-like"/>
</dbReference>
<dbReference type="PANTHER" id="PTHR20883">
    <property type="entry name" value="PHYTANOYL-COA DIOXYGENASE DOMAIN CONTAINING 1"/>
    <property type="match status" value="1"/>
</dbReference>
<dbReference type="PANTHER" id="PTHR20883:SF15">
    <property type="entry name" value="PHYTANOYL-COA DIOXYGENASE DOMAIN-CONTAINING PROTEIN 1"/>
    <property type="match status" value="1"/>
</dbReference>
<dbReference type="Pfam" id="PF05721">
    <property type="entry name" value="PhyH"/>
    <property type="match status" value="1"/>
</dbReference>
<dbReference type="SUPFAM" id="SSF51197">
    <property type="entry name" value="Clavaminate synthase-like"/>
    <property type="match status" value="1"/>
</dbReference>
<protein>
    <recommendedName>
        <fullName>Phytanoyl-CoA dioxygenase domain-containing protein 1 homolog</fullName>
        <ecNumber>1.-.-.-</ecNumber>
    </recommendedName>
</protein>
<reference key="1">
    <citation type="journal article" date="2005" name="Nature">
        <title>The genome of the social amoeba Dictyostelium discoideum.</title>
        <authorList>
            <person name="Eichinger L."/>
            <person name="Pachebat J.A."/>
            <person name="Gloeckner G."/>
            <person name="Rajandream M.A."/>
            <person name="Sucgang R."/>
            <person name="Berriman M."/>
            <person name="Song J."/>
            <person name="Olsen R."/>
            <person name="Szafranski K."/>
            <person name="Xu Q."/>
            <person name="Tunggal B."/>
            <person name="Kummerfeld S."/>
            <person name="Madera M."/>
            <person name="Konfortov B.A."/>
            <person name="Rivero F."/>
            <person name="Bankier A.T."/>
            <person name="Lehmann R."/>
            <person name="Hamlin N."/>
            <person name="Davies R."/>
            <person name="Gaudet P."/>
            <person name="Fey P."/>
            <person name="Pilcher K."/>
            <person name="Chen G."/>
            <person name="Saunders D."/>
            <person name="Sodergren E.J."/>
            <person name="Davis P."/>
            <person name="Kerhornou A."/>
            <person name="Nie X."/>
            <person name="Hall N."/>
            <person name="Anjard C."/>
            <person name="Hemphill L."/>
            <person name="Bason N."/>
            <person name="Farbrother P."/>
            <person name="Desany B."/>
            <person name="Just E."/>
            <person name="Morio T."/>
            <person name="Rost R."/>
            <person name="Churcher C.M."/>
            <person name="Cooper J."/>
            <person name="Haydock S."/>
            <person name="van Driessche N."/>
            <person name="Cronin A."/>
            <person name="Goodhead I."/>
            <person name="Muzny D.M."/>
            <person name="Mourier T."/>
            <person name="Pain A."/>
            <person name="Lu M."/>
            <person name="Harper D."/>
            <person name="Lindsay R."/>
            <person name="Hauser H."/>
            <person name="James K.D."/>
            <person name="Quiles M."/>
            <person name="Madan Babu M."/>
            <person name="Saito T."/>
            <person name="Buchrieser C."/>
            <person name="Wardroper A."/>
            <person name="Felder M."/>
            <person name="Thangavelu M."/>
            <person name="Johnson D."/>
            <person name="Knights A."/>
            <person name="Loulseged H."/>
            <person name="Mungall K.L."/>
            <person name="Oliver K."/>
            <person name="Price C."/>
            <person name="Quail M.A."/>
            <person name="Urushihara H."/>
            <person name="Hernandez J."/>
            <person name="Rabbinowitsch E."/>
            <person name="Steffen D."/>
            <person name="Sanders M."/>
            <person name="Ma J."/>
            <person name="Kohara Y."/>
            <person name="Sharp S."/>
            <person name="Simmonds M.N."/>
            <person name="Spiegler S."/>
            <person name="Tivey A."/>
            <person name="Sugano S."/>
            <person name="White B."/>
            <person name="Walker D."/>
            <person name="Woodward J.R."/>
            <person name="Winckler T."/>
            <person name="Tanaka Y."/>
            <person name="Shaulsky G."/>
            <person name="Schleicher M."/>
            <person name="Weinstock G.M."/>
            <person name="Rosenthal A."/>
            <person name="Cox E.C."/>
            <person name="Chisholm R.L."/>
            <person name="Gibbs R.A."/>
            <person name="Loomis W.F."/>
            <person name="Platzer M."/>
            <person name="Kay R.R."/>
            <person name="Williams J.G."/>
            <person name="Dear P.H."/>
            <person name="Noegel A.A."/>
            <person name="Barrell B.G."/>
            <person name="Kuspa A."/>
        </authorList>
    </citation>
    <scope>NUCLEOTIDE SEQUENCE [LARGE SCALE GENOMIC DNA]</scope>
    <source>
        <strain>AX4</strain>
    </source>
</reference>
<name>PHYD1_DICDI</name>
<keyword id="KW-0223">Dioxygenase</keyword>
<keyword id="KW-0408">Iron</keyword>
<keyword id="KW-0479">Metal-binding</keyword>
<keyword id="KW-0560">Oxidoreductase</keyword>
<keyword id="KW-1185">Reference proteome</keyword>
<evidence type="ECO:0000250" key="1"/>
<evidence type="ECO:0000305" key="2"/>